<proteinExistence type="evidence at transcript level"/>
<sequence length="374" mass="41467">MVKLLNSTRELSINALSMLNSFGDMVAQATGLNRKLLTTDSSDATARRLLQISNAKPNATVALDGSGQYKTIKEALDAVPKKNTEPFIIFIKAGVYKEYIDIPKSMTNVVLIGEGPTKTKITGNKSVKDGPSTFHTTTVGVNGANFVAKNIGFENTAGPEKEQAVALRVSADKAIIYNCQIDGYQDTLYVHTYRQFYRDCTITGTVDFIFGNGEAVLQNCKVIVRKPAQNQSCMVTAQGRTEPIQKGAIVLQNCEIKPDTDYFSLSPPSKTYLGRPWKEYSRTIIMQSYIDKFIEPEGWAPWNITNFGRDTSYYAEYQNRGPGAALDKRITWKGFQKGFTGEAAQKFTAGVYINNDENWLQKANVPYEAGMMKV</sequence>
<keyword id="KW-0063">Aspartyl esterase</keyword>
<keyword id="KW-0134">Cell wall</keyword>
<keyword id="KW-0961">Cell wall biogenesis/degradation</keyword>
<keyword id="KW-1015">Disulfide bond</keyword>
<keyword id="KW-0325">Glycoprotein</keyword>
<keyword id="KW-0378">Hydrolase</keyword>
<keyword id="KW-0964">Secreted</keyword>
<keyword id="KW-0732">Signal</keyword>
<evidence type="ECO:0000250" key="1"/>
<evidence type="ECO:0000255" key="2"/>
<evidence type="ECO:0000255" key="3">
    <source>
        <dbReference type="PROSITE-ProRule" id="PRU10040"/>
    </source>
</evidence>
<evidence type="ECO:0000305" key="4"/>
<name>PME_PETIN</name>
<comment type="function">
    <text>May play a role in pollen germination and/or tube growth.</text>
</comment>
<comment type="catalytic activity">
    <reaction>
        <text>[(1-&gt;4)-alpha-D-galacturonosyl methyl ester](n) + n H2O = [(1-&gt;4)-alpha-D-galacturonosyl](n) + n methanol + n H(+)</text>
        <dbReference type="Rhea" id="RHEA:22380"/>
        <dbReference type="Rhea" id="RHEA-COMP:14570"/>
        <dbReference type="Rhea" id="RHEA-COMP:14573"/>
        <dbReference type="ChEBI" id="CHEBI:15377"/>
        <dbReference type="ChEBI" id="CHEBI:15378"/>
        <dbReference type="ChEBI" id="CHEBI:17790"/>
        <dbReference type="ChEBI" id="CHEBI:140522"/>
        <dbReference type="ChEBI" id="CHEBI:140523"/>
        <dbReference type="EC" id="3.1.1.11"/>
    </reaction>
</comment>
<comment type="pathway">
    <text>Glycan metabolism; pectin degradation; 2-dehydro-3-deoxy-D-gluconate from pectin: step 1/5.</text>
</comment>
<comment type="subcellular location">
    <subcellularLocation>
        <location evidence="4">Secreted</location>
        <location evidence="4">Cell wall</location>
    </subcellularLocation>
</comment>
<comment type="tissue specificity">
    <text>Pollen, and at much lower levels in pistils and petals.</text>
</comment>
<comment type="developmental stage">
    <text>Appears first in early bicellular pollen, peaking in mature pollen.</text>
</comment>
<comment type="similarity">
    <text evidence="4">Belongs to the pectinesterase family.</text>
</comment>
<feature type="signal peptide" evidence="2">
    <location>
        <begin position="1"/>
        <end position="31"/>
    </location>
</feature>
<feature type="chain" id="PRO_0000023495" description="Pectinesterase">
    <location>
        <begin position="32"/>
        <end position="374"/>
    </location>
</feature>
<feature type="active site" description="Proton donor" evidence="3">
    <location>
        <position position="186"/>
    </location>
</feature>
<feature type="active site" description="Nucleophile" evidence="3">
    <location>
        <position position="207"/>
    </location>
</feature>
<feature type="binding site" evidence="1">
    <location>
        <position position="133"/>
    </location>
    <ligand>
        <name>substrate</name>
    </ligand>
</feature>
<feature type="binding site" evidence="1">
    <location>
        <position position="163"/>
    </location>
    <ligand>
        <name>substrate</name>
    </ligand>
</feature>
<feature type="binding site" evidence="1">
    <location>
        <position position="275"/>
    </location>
    <ligand>
        <name>substrate</name>
    </ligand>
</feature>
<feature type="binding site" evidence="1">
    <location>
        <position position="277"/>
    </location>
    <ligand>
        <name>substrate</name>
    </ligand>
</feature>
<feature type="site" description="Transition state stabilizer" evidence="1">
    <location>
        <position position="185"/>
    </location>
</feature>
<feature type="glycosylation site" description="N-linked (GlcNAc...) asparagine" evidence="2">
    <location>
        <position position="58"/>
    </location>
</feature>
<feature type="glycosylation site" description="N-linked (GlcNAc...) asparagine" evidence="2">
    <location>
        <position position="124"/>
    </location>
</feature>
<feature type="glycosylation site" description="N-linked (GlcNAc...) asparagine" evidence="2">
    <location>
        <position position="230"/>
    </location>
</feature>
<feature type="glycosylation site" description="N-linked (GlcNAc...) asparagine" evidence="2">
    <location>
        <position position="303"/>
    </location>
</feature>
<feature type="disulfide bond" evidence="1">
    <location>
        <begin position="200"/>
        <end position="220"/>
    </location>
</feature>
<organism>
    <name type="scientific">Petunia integrifolia</name>
    <name type="common">Violet-flowered petunia</name>
    <name type="synonym">Salpiglossis integrifolia</name>
    <dbReference type="NCBI Taxonomy" id="4103"/>
    <lineage>
        <taxon>Eukaryota</taxon>
        <taxon>Viridiplantae</taxon>
        <taxon>Streptophyta</taxon>
        <taxon>Embryophyta</taxon>
        <taxon>Tracheophyta</taxon>
        <taxon>Spermatophyta</taxon>
        <taxon>Magnoliopsida</taxon>
        <taxon>eudicotyledons</taxon>
        <taxon>Gunneridae</taxon>
        <taxon>Pentapetalae</taxon>
        <taxon>asterids</taxon>
        <taxon>lamiids</taxon>
        <taxon>Solanales</taxon>
        <taxon>Solanaceae</taxon>
        <taxon>Petunioideae</taxon>
        <taxon>Petunia</taxon>
    </lineage>
</organism>
<accession>Q43043</accession>
<gene>
    <name type="primary">PPE1</name>
</gene>
<protein>
    <recommendedName>
        <fullName>Pectinesterase</fullName>
        <shortName>PE</shortName>
        <ecNumber>3.1.1.11</ecNumber>
    </recommendedName>
    <alternativeName>
        <fullName>Pectin methylesterase</fullName>
    </alternativeName>
</protein>
<reference key="1">
    <citation type="journal article" date="1994" name="Plant Mol. Biol.">
        <title>Characterization of a pollen-expressed gene encoding a putative pectin esterase of Petunia inflata.</title>
        <authorList>
            <person name="Mu J.H."/>
            <person name="Stains J."/>
            <person name="Kao T.H."/>
        </authorList>
    </citation>
    <scope>NUCLEOTIDE SEQUENCE [GENOMIC DNA]</scope>
    <source>
        <tissue>Pollen</tissue>
    </source>
</reference>
<dbReference type="EC" id="3.1.1.11"/>
<dbReference type="EMBL" id="L27101">
    <property type="protein sequence ID" value="AAA33714.1"/>
    <property type="molecule type" value="Genomic_DNA"/>
</dbReference>
<dbReference type="PIR" id="S78041">
    <property type="entry name" value="S78041"/>
</dbReference>
<dbReference type="SMR" id="Q43043"/>
<dbReference type="GlyCosmos" id="Q43043">
    <property type="glycosylation" value="4 sites, No reported glycans"/>
</dbReference>
<dbReference type="UniPathway" id="UPA00545">
    <property type="reaction ID" value="UER00823"/>
</dbReference>
<dbReference type="GO" id="GO:0005576">
    <property type="term" value="C:extracellular region"/>
    <property type="evidence" value="ECO:0007669"/>
    <property type="project" value="UniProtKB-KW"/>
</dbReference>
<dbReference type="GO" id="GO:0030599">
    <property type="term" value="F:pectinesterase activity"/>
    <property type="evidence" value="ECO:0007669"/>
    <property type="project" value="UniProtKB-EC"/>
</dbReference>
<dbReference type="GO" id="GO:0042545">
    <property type="term" value="P:cell wall modification"/>
    <property type="evidence" value="ECO:0007669"/>
    <property type="project" value="InterPro"/>
</dbReference>
<dbReference type="GO" id="GO:0045490">
    <property type="term" value="P:pectin catabolic process"/>
    <property type="evidence" value="ECO:0007669"/>
    <property type="project" value="UniProtKB-UniPathway"/>
</dbReference>
<dbReference type="FunFam" id="2.160.20.10:FF:000001">
    <property type="entry name" value="Pectinesterase"/>
    <property type="match status" value="1"/>
</dbReference>
<dbReference type="Gene3D" id="2.160.20.10">
    <property type="entry name" value="Single-stranded right-handed beta-helix, Pectin lyase-like"/>
    <property type="match status" value="1"/>
</dbReference>
<dbReference type="InterPro" id="IPR012334">
    <property type="entry name" value="Pectin_lyas_fold"/>
</dbReference>
<dbReference type="InterPro" id="IPR011050">
    <property type="entry name" value="Pectin_lyase_fold/virulence"/>
</dbReference>
<dbReference type="InterPro" id="IPR033131">
    <property type="entry name" value="Pectinesterase_Asp_AS"/>
</dbReference>
<dbReference type="InterPro" id="IPR000070">
    <property type="entry name" value="Pectinesterase_cat"/>
</dbReference>
<dbReference type="InterPro" id="IPR018040">
    <property type="entry name" value="Pectinesterase_Tyr_AS"/>
</dbReference>
<dbReference type="PANTHER" id="PTHR31707">
    <property type="entry name" value="PECTINESTERASE"/>
    <property type="match status" value="1"/>
</dbReference>
<dbReference type="Pfam" id="PF01095">
    <property type="entry name" value="Pectinesterase"/>
    <property type="match status" value="1"/>
</dbReference>
<dbReference type="SUPFAM" id="SSF51126">
    <property type="entry name" value="Pectin lyase-like"/>
    <property type="match status" value="1"/>
</dbReference>
<dbReference type="PROSITE" id="PS00800">
    <property type="entry name" value="PECTINESTERASE_1"/>
    <property type="match status" value="1"/>
</dbReference>
<dbReference type="PROSITE" id="PS00503">
    <property type="entry name" value="PECTINESTERASE_2"/>
    <property type="match status" value="1"/>
</dbReference>